<evidence type="ECO:0000255" key="1"/>
<evidence type="ECO:0000269" key="2">
    <source>
    </source>
</evidence>
<evidence type="ECO:0000269" key="3">
    <source>
    </source>
</evidence>
<evidence type="ECO:0000269" key="4">
    <source>
    </source>
</evidence>
<evidence type="ECO:0000269" key="5">
    <source>
    </source>
</evidence>
<evidence type="ECO:0000269" key="6">
    <source>
    </source>
</evidence>
<evidence type="ECO:0000269" key="7">
    <source>
    </source>
</evidence>
<evidence type="ECO:0000269" key="8">
    <source>
    </source>
</evidence>
<evidence type="ECO:0000269" key="9">
    <source>
    </source>
</evidence>
<evidence type="ECO:0000269" key="10">
    <source>
    </source>
</evidence>
<evidence type="ECO:0000269" key="11">
    <source>
    </source>
</evidence>
<evidence type="ECO:0000269" key="12">
    <source>
    </source>
</evidence>
<evidence type="ECO:0000269" key="13">
    <source>
    </source>
</evidence>
<evidence type="ECO:0000269" key="14">
    <source>
    </source>
</evidence>
<evidence type="ECO:0000269" key="15">
    <source>
    </source>
</evidence>
<evidence type="ECO:0000269" key="16">
    <source>
    </source>
</evidence>
<evidence type="ECO:0000269" key="17">
    <source>
    </source>
</evidence>
<evidence type="ECO:0000269" key="18">
    <source>
    </source>
</evidence>
<evidence type="ECO:0000269" key="19">
    <source>
    </source>
</evidence>
<evidence type="ECO:0000269" key="20">
    <source>
    </source>
</evidence>
<evidence type="ECO:0000269" key="21">
    <source>
    </source>
</evidence>
<evidence type="ECO:0000269" key="22">
    <source>
    </source>
</evidence>
<evidence type="ECO:0000269" key="23">
    <source>
    </source>
</evidence>
<evidence type="ECO:0000269" key="24">
    <source>
    </source>
</evidence>
<evidence type="ECO:0000269" key="25">
    <source>
    </source>
</evidence>
<evidence type="ECO:0000269" key="26">
    <source ref="25"/>
</evidence>
<evidence type="ECO:0000269" key="27">
    <source ref="8"/>
</evidence>
<evidence type="ECO:0000303" key="28">
    <source>
    </source>
</evidence>
<evidence type="ECO:0000303" key="29">
    <source>
    </source>
</evidence>
<evidence type="ECO:0000303" key="30">
    <source>
    </source>
</evidence>
<evidence type="ECO:0000305" key="31"/>
<evidence type="ECO:0000305" key="32">
    <source>
    </source>
</evidence>
<evidence type="ECO:0000305" key="33">
    <source>
    </source>
</evidence>
<evidence type="ECO:0007829" key="34">
    <source>
        <dbReference type="PDB" id="1A6Z"/>
    </source>
</evidence>
<evidence type="ECO:0007829" key="35">
    <source>
        <dbReference type="PDB" id="1DE4"/>
    </source>
</evidence>
<dbReference type="EMBL" id="U60319">
    <property type="protein sequence ID" value="AAC51823.1"/>
    <property type="molecule type" value="mRNA"/>
</dbReference>
<dbReference type="EMBL" id="U91328">
    <property type="protein sequence ID" value="AAB82083.1"/>
    <property type="molecule type" value="Genomic_DNA"/>
</dbReference>
<dbReference type="EMBL" id="Z92910">
    <property type="protein sequence ID" value="CAB07442.1"/>
    <property type="molecule type" value="Genomic_DNA"/>
</dbReference>
<dbReference type="EMBL" id="Y09801">
    <property type="protein sequence ID" value="CAA70934.1"/>
    <property type="molecule type" value="Genomic_DNA"/>
</dbReference>
<dbReference type="EMBL" id="Y09800">
    <property type="protein sequence ID" value="CAA70934.1"/>
    <property type="status" value="JOINED"/>
    <property type="molecule type" value="Genomic_DNA"/>
</dbReference>
<dbReference type="EMBL" id="Y09803">
    <property type="protein sequence ID" value="CAA70934.1"/>
    <property type="status" value="JOINED"/>
    <property type="molecule type" value="Genomic_DNA"/>
</dbReference>
<dbReference type="EMBL" id="Y09799">
    <property type="protein sequence ID" value="CAA70934.1"/>
    <property type="status" value="JOINED"/>
    <property type="molecule type" value="Genomic_DNA"/>
</dbReference>
<dbReference type="EMBL" id="AF079407">
    <property type="protein sequence ID" value="AAC62646.1"/>
    <property type="molecule type" value="mRNA"/>
</dbReference>
<dbReference type="EMBL" id="AF079408">
    <property type="protein sequence ID" value="AAC62647.1"/>
    <property type="molecule type" value="mRNA"/>
</dbReference>
<dbReference type="EMBL" id="AF079409">
    <property type="protein sequence ID" value="AAC62648.1"/>
    <property type="molecule type" value="mRNA"/>
</dbReference>
<dbReference type="EMBL" id="AF115264">
    <property type="protein sequence ID" value="AAG29571.1"/>
    <property type="molecule type" value="mRNA"/>
</dbReference>
<dbReference type="EMBL" id="AF115265">
    <property type="protein sequence ID" value="AAG29572.1"/>
    <property type="molecule type" value="mRNA"/>
</dbReference>
<dbReference type="EMBL" id="AF144240">
    <property type="protein sequence ID" value="AAG29575.1"/>
    <property type="molecule type" value="mRNA"/>
</dbReference>
<dbReference type="EMBL" id="AF144242">
    <property type="protein sequence ID" value="AAG29577.1"/>
    <property type="molecule type" value="mRNA"/>
</dbReference>
<dbReference type="EMBL" id="AF149804">
    <property type="protein sequence ID" value="AAG29342.1"/>
    <property type="molecule type" value="mRNA"/>
</dbReference>
<dbReference type="EMBL" id="AJ249335">
    <property type="protein sequence ID" value="CAC67792.1"/>
    <property type="molecule type" value="mRNA"/>
</dbReference>
<dbReference type="EMBL" id="AJ249336">
    <property type="protein sequence ID" value="CAC67793.1"/>
    <property type="molecule type" value="mRNA"/>
</dbReference>
<dbReference type="EMBL" id="AJ249337">
    <property type="protein sequence ID" value="CAC67794.1"/>
    <property type="molecule type" value="mRNA"/>
</dbReference>
<dbReference type="EMBL" id="AJ249338">
    <property type="protein sequence ID" value="CAC67795.1"/>
    <property type="molecule type" value="mRNA"/>
</dbReference>
<dbReference type="EMBL" id="AJ250635">
    <property type="protein sequence ID" value="CAC80805.1"/>
    <property type="molecule type" value="mRNA"/>
</dbReference>
<dbReference type="EMBL" id="EU523119">
    <property type="protein sequence ID" value="ACB21042.1"/>
    <property type="molecule type" value="Genomic_DNA"/>
</dbReference>
<dbReference type="EMBL" id="CH471087">
    <property type="protein sequence ID" value="EAW55524.1"/>
    <property type="molecule type" value="Genomic_DNA"/>
</dbReference>
<dbReference type="EMBL" id="CH471087">
    <property type="protein sequence ID" value="EAW55526.1"/>
    <property type="molecule type" value="Genomic_DNA"/>
</dbReference>
<dbReference type="EMBL" id="BC117201">
    <property type="protein sequence ID" value="AAI17202.1"/>
    <property type="molecule type" value="mRNA"/>
</dbReference>
<dbReference type="EMBL" id="BC117203">
    <property type="protein sequence ID" value="AAI17204.1"/>
    <property type="molecule type" value="mRNA"/>
</dbReference>
<dbReference type="CCDS" id="CCDS4578.1">
    <molecule id="Q30201-1"/>
</dbReference>
<dbReference type="CCDS" id="CCDS4579.1">
    <molecule id="Q30201-7"/>
</dbReference>
<dbReference type="CCDS" id="CCDS4580.1">
    <molecule id="Q30201-2"/>
</dbReference>
<dbReference type="CCDS" id="CCDS4581.1">
    <molecule id="Q30201-6"/>
</dbReference>
<dbReference type="CCDS" id="CCDS4582.1">
    <molecule id="Q30201-11"/>
</dbReference>
<dbReference type="CCDS" id="CCDS47386.1">
    <molecule id="Q30201-10"/>
</dbReference>
<dbReference type="CCDS" id="CCDS47387.1">
    <molecule id="Q30201-5"/>
</dbReference>
<dbReference type="CCDS" id="CCDS54974.1">
    <molecule id="Q30201-3"/>
</dbReference>
<dbReference type="CCDS" id="CCDS54975.1">
    <molecule id="Q30201-4"/>
</dbReference>
<dbReference type="RefSeq" id="NP_000401.1">
    <molecule id="Q30201-1"/>
    <property type="nucleotide sequence ID" value="NM_000410.4"/>
</dbReference>
<dbReference type="RefSeq" id="NP_001287678.1">
    <property type="nucleotide sequence ID" value="NM_001300749.1"/>
</dbReference>
<dbReference type="RefSeq" id="NP_620572.1">
    <molecule id="Q30201-10"/>
    <property type="nucleotide sequence ID" value="NM_139003.3"/>
</dbReference>
<dbReference type="RefSeq" id="NP_620573.1">
    <molecule id="Q30201-7"/>
    <property type="nucleotide sequence ID" value="NM_139004.3"/>
</dbReference>
<dbReference type="RefSeq" id="NP_620575.1">
    <molecule id="Q30201-3"/>
    <property type="nucleotide sequence ID" value="NM_139006.3"/>
</dbReference>
<dbReference type="RefSeq" id="NP_620576.1">
    <molecule id="Q30201-2"/>
    <property type="nucleotide sequence ID" value="NM_139007.3"/>
</dbReference>
<dbReference type="RefSeq" id="NP_620577.1">
    <molecule id="Q30201-4"/>
    <property type="nucleotide sequence ID" value="NM_139008.3"/>
</dbReference>
<dbReference type="RefSeq" id="NP_620578.1">
    <molecule id="Q30201-5"/>
    <property type="nucleotide sequence ID" value="NM_139009.3"/>
</dbReference>
<dbReference type="RefSeq" id="NP_620579.1">
    <molecule id="Q30201-6"/>
    <property type="nucleotide sequence ID" value="NM_139010.3"/>
</dbReference>
<dbReference type="RefSeq" id="NP_620580.1">
    <molecule id="Q30201-11"/>
    <property type="nucleotide sequence ID" value="NM_139011.3"/>
</dbReference>
<dbReference type="PDB" id="1A6Z">
    <property type="method" value="X-ray"/>
    <property type="resolution" value="2.60 A"/>
    <property type="chains" value="A/C=23-297"/>
</dbReference>
<dbReference type="PDB" id="1DE4">
    <property type="method" value="X-ray"/>
    <property type="resolution" value="2.80 A"/>
    <property type="chains" value="A/D/G=23-297"/>
</dbReference>
<dbReference type="PDBsum" id="1A6Z"/>
<dbReference type="PDBsum" id="1DE4"/>
<dbReference type="SMR" id="Q30201"/>
<dbReference type="BioGRID" id="109325">
    <property type="interactions" value="174"/>
</dbReference>
<dbReference type="CORUM" id="Q30201"/>
<dbReference type="DIP" id="DIP-2737N"/>
<dbReference type="FunCoup" id="Q30201">
    <property type="interactions" value="178"/>
</dbReference>
<dbReference type="IntAct" id="Q30201">
    <property type="interactions" value="119"/>
</dbReference>
<dbReference type="MINT" id="Q30201"/>
<dbReference type="STRING" id="9606.ENSP00000417404"/>
<dbReference type="GlyCosmos" id="Q30201">
    <property type="glycosylation" value="3 sites, No reported glycans"/>
</dbReference>
<dbReference type="GlyGen" id="Q30201">
    <property type="glycosylation" value="4 sites, 3 N-linked glycans (2 sites), 1 O-linked glycan (1 site)"/>
</dbReference>
<dbReference type="iPTMnet" id="Q30201"/>
<dbReference type="PhosphoSitePlus" id="Q30201"/>
<dbReference type="BioMuta" id="HFE"/>
<dbReference type="DMDM" id="2497915"/>
<dbReference type="jPOST" id="Q30201"/>
<dbReference type="MassIVE" id="Q30201"/>
<dbReference type="PaxDb" id="9606-ENSP00000417404"/>
<dbReference type="PeptideAtlas" id="Q30201"/>
<dbReference type="ProteomicsDB" id="61558">
    <molecule id="Q30201-1"/>
</dbReference>
<dbReference type="ProteomicsDB" id="61559">
    <molecule id="Q30201-10"/>
</dbReference>
<dbReference type="ProteomicsDB" id="61560">
    <molecule id="Q30201-11"/>
</dbReference>
<dbReference type="ProteomicsDB" id="61561">
    <molecule id="Q30201-2"/>
</dbReference>
<dbReference type="ProteomicsDB" id="61562">
    <molecule id="Q30201-3"/>
</dbReference>
<dbReference type="ProteomicsDB" id="61563">
    <molecule id="Q30201-4"/>
</dbReference>
<dbReference type="ProteomicsDB" id="61564">
    <molecule id="Q30201-5"/>
</dbReference>
<dbReference type="ProteomicsDB" id="61565">
    <molecule id="Q30201-6"/>
</dbReference>
<dbReference type="ProteomicsDB" id="61566">
    <molecule id="Q30201-7"/>
</dbReference>
<dbReference type="ProteomicsDB" id="61567">
    <molecule id="Q30201-8"/>
</dbReference>
<dbReference type="ProteomicsDB" id="61568">
    <molecule id="Q30201-9"/>
</dbReference>
<dbReference type="Pumba" id="Q30201"/>
<dbReference type="TopDownProteomics" id="Q30201-1">
    <molecule id="Q30201-1"/>
</dbReference>
<dbReference type="Antibodypedia" id="2221">
    <property type="antibodies" value="344 antibodies from 32 providers"/>
</dbReference>
<dbReference type="DNASU" id="3077"/>
<dbReference type="Ensembl" id="ENST00000317896.11">
    <molecule id="Q30201-7"/>
    <property type="protein sequence ID" value="ENSP00000313776.7"/>
    <property type="gene ID" value="ENSG00000010704.20"/>
</dbReference>
<dbReference type="Ensembl" id="ENST00000336625.12">
    <molecule id="Q30201-10"/>
    <property type="protein sequence ID" value="ENSP00000337819.8"/>
    <property type="gene ID" value="ENSG00000010704.20"/>
</dbReference>
<dbReference type="Ensembl" id="ENST00000349999.8">
    <molecule id="Q30201-2"/>
    <property type="protein sequence ID" value="ENSP00000259699.6"/>
    <property type="gene ID" value="ENSG00000010704.20"/>
</dbReference>
<dbReference type="Ensembl" id="ENST00000352392.8">
    <molecule id="Q30201-11"/>
    <property type="protein sequence ID" value="ENSP00000315936.4"/>
    <property type="gene ID" value="ENSG00000010704.20"/>
</dbReference>
<dbReference type="Ensembl" id="ENST00000353147.9">
    <molecule id="Q30201-6"/>
    <property type="protein sequence ID" value="ENSP00000312342.5"/>
    <property type="gene ID" value="ENSG00000010704.20"/>
</dbReference>
<dbReference type="Ensembl" id="ENST00000357618.10">
    <molecule id="Q30201-1"/>
    <property type="protein sequence ID" value="ENSP00000417404.1"/>
    <property type="gene ID" value="ENSG00000010704.20"/>
</dbReference>
<dbReference type="Ensembl" id="ENST00000397022.7">
    <molecule id="Q30201-5"/>
    <property type="protein sequence ID" value="ENSP00000380217.3"/>
    <property type="gene ID" value="ENSG00000010704.20"/>
</dbReference>
<dbReference type="Ensembl" id="ENST00000461397.6">
    <molecule id="Q30201-3"/>
    <property type="protein sequence ID" value="ENSP00000420802.1"/>
    <property type="gene ID" value="ENSG00000010704.20"/>
</dbReference>
<dbReference type="Ensembl" id="ENST00000488199.5">
    <molecule id="Q30201-4"/>
    <property type="protein sequence ID" value="ENSP00000420559.1"/>
    <property type="gene ID" value="ENSG00000010704.20"/>
</dbReference>
<dbReference type="GeneID" id="3077"/>
<dbReference type="KEGG" id="hsa:3077"/>
<dbReference type="MANE-Select" id="ENST00000357618.10">
    <property type="protein sequence ID" value="ENSP00000417404.1"/>
    <property type="RefSeq nucleotide sequence ID" value="NM_000410.4"/>
    <property type="RefSeq protein sequence ID" value="NP_000401.1"/>
</dbReference>
<dbReference type="UCSC" id="uc003nfx.2">
    <molecule id="Q30201-1"/>
    <property type="organism name" value="human"/>
</dbReference>
<dbReference type="AGR" id="HGNC:4886"/>
<dbReference type="CTD" id="3077"/>
<dbReference type="DisGeNET" id="3077"/>
<dbReference type="GeneCards" id="HFE"/>
<dbReference type="GeneReviews" id="HFE"/>
<dbReference type="HGNC" id="HGNC:4886">
    <property type="gene designation" value="HFE"/>
</dbReference>
<dbReference type="HPA" id="ENSG00000010704">
    <property type="expression patterns" value="Low tissue specificity"/>
</dbReference>
<dbReference type="MalaCards" id="HFE"/>
<dbReference type="MIM" id="235200">
    <property type="type" value="phenotype"/>
</dbReference>
<dbReference type="MIM" id="613609">
    <property type="type" value="gene"/>
</dbReference>
<dbReference type="neXtProt" id="NX_Q30201"/>
<dbReference type="OpenTargets" id="ENSG00000010704"/>
<dbReference type="Orphanet" id="586">
    <property type="disease" value="Cystic fibrosis"/>
</dbReference>
<dbReference type="Orphanet" id="648581">
    <property type="disease" value="Digenic hemochromatosis"/>
</dbReference>
<dbReference type="Orphanet" id="443062">
    <property type="disease" value="Familial porphyria cutanea tarda"/>
</dbReference>
<dbReference type="Orphanet" id="443057">
    <property type="disease" value="Sporadic porphyria cutanea tarda"/>
</dbReference>
<dbReference type="Orphanet" id="465508">
    <property type="disease" value="Symptomatic form of HFE-related hemochromatosis"/>
</dbReference>
<dbReference type="PharmGKB" id="PA29263"/>
<dbReference type="VEuPathDB" id="HostDB:ENSG00000010704"/>
<dbReference type="eggNOG" id="KOG1745">
    <property type="taxonomic scope" value="Eukaryota"/>
</dbReference>
<dbReference type="GeneTree" id="ENSGT01130000278293"/>
<dbReference type="HOGENOM" id="CLU_047501_10_1_1"/>
<dbReference type="InParanoid" id="Q30201"/>
<dbReference type="OMA" id="KGWEHMF"/>
<dbReference type="OrthoDB" id="10043043at2759"/>
<dbReference type="PAN-GO" id="Q30201">
    <property type="GO annotations" value="5 GO annotations based on evolutionary models"/>
</dbReference>
<dbReference type="PhylomeDB" id="Q30201"/>
<dbReference type="TreeFam" id="TF336617"/>
<dbReference type="PathwayCommons" id="Q30201"/>
<dbReference type="Reactome" id="R-HSA-917977">
    <property type="pathway name" value="Transferrin endocytosis and recycling"/>
</dbReference>
<dbReference type="SignaLink" id="Q30201"/>
<dbReference type="BioGRID-ORCS" id="3077">
    <property type="hits" value="14 hits in 1151 CRISPR screens"/>
</dbReference>
<dbReference type="EvolutionaryTrace" id="Q30201"/>
<dbReference type="GeneWiki" id="HFE_(gene)"/>
<dbReference type="GenomeRNAi" id="3077"/>
<dbReference type="Pharos" id="Q30201">
    <property type="development level" value="Tbio"/>
</dbReference>
<dbReference type="PRO" id="PR:Q30201"/>
<dbReference type="Proteomes" id="UP000005640">
    <property type="component" value="Chromosome 6"/>
</dbReference>
<dbReference type="RNAct" id="Q30201">
    <property type="molecule type" value="protein"/>
</dbReference>
<dbReference type="Bgee" id="ENSG00000010704">
    <property type="expression patterns" value="Expressed in stromal cell of endometrium and 183 other cell types or tissues"/>
</dbReference>
<dbReference type="ExpressionAtlas" id="Q30201">
    <property type="expression patterns" value="baseline and differential"/>
</dbReference>
<dbReference type="GO" id="GO:0045177">
    <property type="term" value="C:apical part of cell"/>
    <property type="evidence" value="ECO:0000314"/>
    <property type="project" value="UniProtKB"/>
</dbReference>
<dbReference type="GO" id="GO:0045178">
    <property type="term" value="C:basal part of cell"/>
    <property type="evidence" value="ECO:0000314"/>
    <property type="project" value="UniProtKB"/>
</dbReference>
<dbReference type="GO" id="GO:0031410">
    <property type="term" value="C:cytoplasmic vesicle"/>
    <property type="evidence" value="ECO:0000314"/>
    <property type="project" value="UniProtKB"/>
</dbReference>
<dbReference type="GO" id="GO:0005769">
    <property type="term" value="C:early endosome"/>
    <property type="evidence" value="ECO:0000314"/>
    <property type="project" value="UniProtKB"/>
</dbReference>
<dbReference type="GO" id="GO:0009897">
    <property type="term" value="C:external side of plasma membrane"/>
    <property type="evidence" value="ECO:0000314"/>
    <property type="project" value="BHF-UCL"/>
</dbReference>
<dbReference type="GO" id="GO:0005615">
    <property type="term" value="C:extracellular space"/>
    <property type="evidence" value="ECO:0000314"/>
    <property type="project" value="BHF-UCL"/>
</dbReference>
<dbReference type="GO" id="GO:1990712">
    <property type="term" value="C:HFE-transferrin receptor complex"/>
    <property type="evidence" value="ECO:0000314"/>
    <property type="project" value="BHF-UCL"/>
</dbReference>
<dbReference type="GO" id="GO:0005654">
    <property type="term" value="C:nucleoplasm"/>
    <property type="evidence" value="ECO:0000314"/>
    <property type="project" value="HPA"/>
</dbReference>
<dbReference type="GO" id="GO:0048471">
    <property type="term" value="C:perinuclear region of cytoplasm"/>
    <property type="evidence" value="ECO:0000314"/>
    <property type="project" value="UniProtKB"/>
</dbReference>
<dbReference type="GO" id="GO:0005886">
    <property type="term" value="C:plasma membrane"/>
    <property type="evidence" value="ECO:0000314"/>
    <property type="project" value="HPA"/>
</dbReference>
<dbReference type="GO" id="GO:0055037">
    <property type="term" value="C:recycling endosome"/>
    <property type="evidence" value="ECO:0000314"/>
    <property type="project" value="UniProtKB"/>
</dbReference>
<dbReference type="GO" id="GO:0030881">
    <property type="term" value="F:beta-2-microglobulin binding"/>
    <property type="evidence" value="ECO:0000353"/>
    <property type="project" value="BHF-UCL"/>
</dbReference>
<dbReference type="GO" id="GO:0039706">
    <property type="term" value="F:co-receptor binding"/>
    <property type="evidence" value="ECO:0000353"/>
    <property type="project" value="BHF-UCL"/>
</dbReference>
<dbReference type="GO" id="GO:0005102">
    <property type="term" value="F:signaling receptor binding"/>
    <property type="evidence" value="ECO:0000353"/>
    <property type="project" value="UniProtKB"/>
</dbReference>
<dbReference type="GO" id="GO:1990459">
    <property type="term" value="F:transferrin receptor binding"/>
    <property type="evidence" value="ECO:0000353"/>
    <property type="project" value="BHF-UCL"/>
</dbReference>
<dbReference type="GO" id="GO:0141109">
    <property type="term" value="F:transporter activator activity"/>
    <property type="evidence" value="ECO:0000316"/>
    <property type="project" value="BHF-UCL"/>
</dbReference>
<dbReference type="GO" id="GO:0030509">
    <property type="term" value="P:BMP signaling pathway"/>
    <property type="evidence" value="ECO:0000314"/>
    <property type="project" value="BHF-UCL"/>
</dbReference>
<dbReference type="GO" id="GO:0071281">
    <property type="term" value="P:cellular response to iron ion"/>
    <property type="evidence" value="ECO:0000316"/>
    <property type="project" value="BHF-UCL"/>
</dbReference>
<dbReference type="GO" id="GO:0042446">
    <property type="term" value="P:hormone biosynthetic process"/>
    <property type="evidence" value="ECO:0007669"/>
    <property type="project" value="Ensembl"/>
</dbReference>
<dbReference type="GO" id="GO:0006879">
    <property type="term" value="P:intracellular iron ion homeostasis"/>
    <property type="evidence" value="ECO:0000314"/>
    <property type="project" value="UniProtKB"/>
</dbReference>
<dbReference type="GO" id="GO:0060586">
    <property type="term" value="P:multicellular organismal-level iron ion homeostasis"/>
    <property type="evidence" value="ECO:0000315"/>
    <property type="project" value="BHF-UCL"/>
</dbReference>
<dbReference type="GO" id="GO:1904283">
    <property type="term" value="P:negative regulation of antigen processing and presentation of endogenous peptide antigen via MHC class I"/>
    <property type="evidence" value="ECO:0000316"/>
    <property type="project" value="BHF-UCL"/>
</dbReference>
<dbReference type="GO" id="GO:2001186">
    <property type="term" value="P:negative regulation of CD8-positive, alpha-beta T cell activation"/>
    <property type="evidence" value="ECO:0000316"/>
    <property type="project" value="BHF-UCL"/>
</dbReference>
<dbReference type="GO" id="GO:0032435">
    <property type="term" value="P:negative regulation of proteasomal ubiquitin-dependent protein catabolic process"/>
    <property type="evidence" value="ECO:0000314"/>
    <property type="project" value="BHF-UCL"/>
</dbReference>
<dbReference type="GO" id="GO:1900121">
    <property type="term" value="P:negative regulation of receptor binding"/>
    <property type="evidence" value="ECO:0000314"/>
    <property type="project" value="BHF-UCL"/>
</dbReference>
<dbReference type="GO" id="GO:2000272">
    <property type="term" value="P:negative regulation of signaling receptor activity"/>
    <property type="evidence" value="ECO:0000314"/>
    <property type="project" value="BHF-UCL"/>
</dbReference>
<dbReference type="GO" id="GO:0002725">
    <property type="term" value="P:negative regulation of T cell cytokine production"/>
    <property type="evidence" value="ECO:0000316"/>
    <property type="project" value="BHF-UCL"/>
</dbReference>
<dbReference type="GO" id="GO:2000059">
    <property type="term" value="P:negative regulation of ubiquitin-dependent protein catabolic process"/>
    <property type="evidence" value="ECO:0000314"/>
    <property type="project" value="BHF-UCL"/>
</dbReference>
<dbReference type="GO" id="GO:0010628">
    <property type="term" value="P:positive regulation of gene expression"/>
    <property type="evidence" value="ECO:0000250"/>
    <property type="project" value="BHF-UCL"/>
</dbReference>
<dbReference type="GO" id="GO:0090277">
    <property type="term" value="P:positive regulation of peptide hormone secretion"/>
    <property type="evidence" value="ECO:0000315"/>
    <property type="project" value="BHF-UCL"/>
</dbReference>
<dbReference type="GO" id="GO:0048260">
    <property type="term" value="P:positive regulation of receptor-mediated endocytosis"/>
    <property type="evidence" value="ECO:0000316"/>
    <property type="project" value="BHF-UCL"/>
</dbReference>
<dbReference type="GO" id="GO:0060391">
    <property type="term" value="P:positive regulation of SMAD protein signal transduction"/>
    <property type="evidence" value="ECO:0000314"/>
    <property type="project" value="BHF-UCL"/>
</dbReference>
<dbReference type="GO" id="GO:0065003">
    <property type="term" value="P:protein-containing complex assembly"/>
    <property type="evidence" value="ECO:0000304"/>
    <property type="project" value="ProtInc"/>
</dbReference>
<dbReference type="GO" id="GO:0034756">
    <property type="term" value="P:regulation of iron ion transport"/>
    <property type="evidence" value="ECO:0000316"/>
    <property type="project" value="BHF-UCL"/>
</dbReference>
<dbReference type="GO" id="GO:2000008">
    <property type="term" value="P:regulation of protein localization to cell surface"/>
    <property type="evidence" value="ECO:0000315"/>
    <property type="project" value="BHF-UCL"/>
</dbReference>
<dbReference type="GO" id="GO:0010039">
    <property type="term" value="P:response to iron ion"/>
    <property type="evidence" value="ECO:0000315"/>
    <property type="project" value="BHF-UCL"/>
</dbReference>
<dbReference type="GO" id="GO:1990641">
    <property type="term" value="P:response to iron ion starvation"/>
    <property type="evidence" value="ECO:0000318"/>
    <property type="project" value="GO_Central"/>
</dbReference>
<dbReference type="GO" id="GO:0033572">
    <property type="term" value="P:transferrin transport"/>
    <property type="evidence" value="ECO:0000314"/>
    <property type="project" value="BHF-UCL"/>
</dbReference>
<dbReference type="CDD" id="cd21021">
    <property type="entry name" value="IgC1_MHC_Ib_HLA-H"/>
    <property type="match status" value="1"/>
</dbReference>
<dbReference type="FunFam" id="3.30.500.10:FF:000001">
    <property type="entry name" value="H-2 class I histocompatibility antigen, alpha chain"/>
    <property type="match status" value="1"/>
</dbReference>
<dbReference type="FunFam" id="2.60.40.10:FF:000204">
    <property type="entry name" value="Major histocompatibility complex, class I-related protein"/>
    <property type="match status" value="1"/>
</dbReference>
<dbReference type="Gene3D" id="2.60.40.10">
    <property type="entry name" value="Immunoglobulins"/>
    <property type="match status" value="1"/>
</dbReference>
<dbReference type="Gene3D" id="3.30.500.10">
    <property type="entry name" value="MHC class I-like antigen recognition-like"/>
    <property type="match status" value="1"/>
</dbReference>
<dbReference type="InterPro" id="IPR007110">
    <property type="entry name" value="Ig-like_dom"/>
</dbReference>
<dbReference type="InterPro" id="IPR036179">
    <property type="entry name" value="Ig-like_dom_sf"/>
</dbReference>
<dbReference type="InterPro" id="IPR013783">
    <property type="entry name" value="Ig-like_fold"/>
</dbReference>
<dbReference type="InterPro" id="IPR003006">
    <property type="entry name" value="Ig/MHC_CS"/>
</dbReference>
<dbReference type="InterPro" id="IPR003597">
    <property type="entry name" value="Ig_C1-set"/>
</dbReference>
<dbReference type="InterPro" id="IPR050208">
    <property type="entry name" value="MHC_class-I_related"/>
</dbReference>
<dbReference type="InterPro" id="IPR011161">
    <property type="entry name" value="MHC_I-like_Ag-recog"/>
</dbReference>
<dbReference type="InterPro" id="IPR037055">
    <property type="entry name" value="MHC_I-like_Ag-recog_sf"/>
</dbReference>
<dbReference type="InterPro" id="IPR011162">
    <property type="entry name" value="MHC_I/II-like_Ag-recog"/>
</dbReference>
<dbReference type="InterPro" id="IPR001039">
    <property type="entry name" value="MHC_I_a_a1/a2"/>
</dbReference>
<dbReference type="PANTHER" id="PTHR16675:SF172">
    <property type="entry name" value="HEREDITARY HEMOCHROMATOSIS PROTEIN"/>
    <property type="match status" value="1"/>
</dbReference>
<dbReference type="PANTHER" id="PTHR16675">
    <property type="entry name" value="MHC CLASS I-RELATED"/>
    <property type="match status" value="1"/>
</dbReference>
<dbReference type="Pfam" id="PF07654">
    <property type="entry name" value="C1-set"/>
    <property type="match status" value="1"/>
</dbReference>
<dbReference type="Pfam" id="PF00129">
    <property type="entry name" value="MHC_I"/>
    <property type="match status" value="1"/>
</dbReference>
<dbReference type="PRINTS" id="PR01638">
    <property type="entry name" value="MHCCLASSI"/>
</dbReference>
<dbReference type="SMART" id="SM00407">
    <property type="entry name" value="IGc1"/>
    <property type="match status" value="1"/>
</dbReference>
<dbReference type="SUPFAM" id="SSF48726">
    <property type="entry name" value="Immunoglobulin"/>
    <property type="match status" value="1"/>
</dbReference>
<dbReference type="SUPFAM" id="SSF54452">
    <property type="entry name" value="MHC antigen-recognition domain"/>
    <property type="match status" value="1"/>
</dbReference>
<dbReference type="PROSITE" id="PS50835">
    <property type="entry name" value="IG_LIKE"/>
    <property type="match status" value="1"/>
</dbReference>
<dbReference type="PROSITE" id="PS00290">
    <property type="entry name" value="IG_MHC"/>
    <property type="match status" value="1"/>
</dbReference>
<comment type="function">
    <text evidence="23">Binds to transferrin receptor (TFR) and reduces its affinity for iron-loaded transferrin.</text>
</comment>
<comment type="subunit">
    <text evidence="7 24">Binds TFR through the extracellular domain in a pH-dependent manner.</text>
</comment>
<comment type="interaction">
    <interactant intactId="EBI-1028850">
        <id>Q30201</id>
    </interactant>
    <interactant intactId="EBI-714718">
        <id>P61769</id>
        <label>B2M</label>
    </interactant>
    <organismsDiffer>false</organismsDiffer>
    <experiments>5</experiments>
</comment>
<comment type="interaction">
    <interactant intactId="EBI-1028850">
        <id>Q30201</id>
    </interactant>
    <interactant intactId="EBI-355727">
        <id>P02786</id>
        <label>TFRC</label>
    </interactant>
    <organismsDiffer>false</organismsDiffer>
    <experiments>3</experiments>
</comment>
<comment type="interaction">
    <interactant intactId="EBI-15489346">
        <id>Q30201-1</id>
    </interactant>
    <interactant intactId="EBI-355727">
        <id>P02786</id>
        <label>TFRC</label>
    </interactant>
    <organismsDiffer>false</organismsDiffer>
    <experiments>3</experiments>
</comment>
<comment type="subcellular location">
    <subcellularLocation>
        <location evidence="23">Cell membrane</location>
        <topology evidence="32">Single-pass type I membrane protein</topology>
    </subcellularLocation>
</comment>
<comment type="alternative products">
    <event type="alternative splicing"/>
    <isoform>
        <id>Q30201-1</id>
        <name>1</name>
        <sequence type="displayed"/>
    </isoform>
    <isoform>
        <id>Q30201-2</id>
        <name>2</name>
        <name>delE2</name>
        <sequence type="described" ref="VSP_003218"/>
    </isoform>
    <isoform>
        <id>Q30201-3</id>
        <name>3</name>
        <name>del14E4</name>
        <sequence type="described" ref="VSP_003225"/>
    </isoform>
    <isoform>
        <id>Q30201-4</id>
        <name>4</name>
        <name>delE214E4</name>
        <sequence type="described" ref="VSP_003218 VSP_003225"/>
    </isoform>
    <isoform>
        <id>Q30201-5</id>
        <name>5</name>
        <sequence type="described" ref="VSP_003219"/>
    </isoform>
    <isoform>
        <id>Q30201-6</id>
        <name>6</name>
        <sequence type="described" ref="VSP_047336 VSP_003220"/>
    </isoform>
    <isoform>
        <id>Q30201-7</id>
        <name>7</name>
        <name>delE3</name>
        <sequence type="described" ref="VSP_003221"/>
    </isoform>
    <isoform>
        <id>Q30201-8</id>
        <name>8</name>
        <name>1043-2283del,intron6ins</name>
        <sequence type="described" ref="VSP_003226 VSP_003227"/>
    </isoform>
    <isoform>
        <id>Q30201-9</id>
        <name>9</name>
        <name>delE3-7</name>
        <sequence type="described" ref="VSP_003223 VSP_003224"/>
    </isoform>
    <isoform>
        <id>Q30201-10</id>
        <name>10</name>
        <name>562-878del</name>
        <sequence type="described" ref="VSP_003222"/>
    </isoform>
    <isoform>
        <id>Q30201-11</id>
        <name>11</name>
        <sequence type="described" ref="VSP_043477 VSP_043478"/>
    </isoform>
    <text>Additional isoforms seem to exist.</text>
</comment>
<comment type="tissue specificity">
    <text>Expressed in all tissues tested except brain.</text>
</comment>
<comment type="polymorphism">
    <text evidence="18">Genetic variations in HFE may influence the transferrin serum levels. Iron is essential for biochemical functions such as oxygen transport and oxidative phosphorylation. Excessive iron can cause iron-overload-related liver diseases, whereas iron deficiency can lead to anemia. Iron status can be assessed by measuring the levels of serum iron, serum transferrin, transferrin saturation with iron, and serum ferritin.</text>
</comment>
<comment type="disease" evidence="2 3 4 5 9 10 11 12 13 14 15 16 17 19 20 21 25 26">
    <disease id="DI-01714">
        <name>Hemochromatosis 1</name>
        <acronym>HFE1</acronym>
        <description>A disorder of iron metabolism characterized by iron overload. Excess iron is deposited in a variety of organs leading to their failure, and resulting in serious illnesses including cirrhosis, hepatomas, diabetes, cardiomyopathy, arthritis, and hypogonadotropic hypogonadism. Severe effects of the disease usually do not appear until after decades of progressive iron loading.</description>
        <dbReference type="MIM" id="235200"/>
    </disease>
    <text>The disease is caused by variants affecting the gene represented in this entry.</text>
</comment>
<comment type="miscellaneous">
    <molecule>Isoform 1</molecule>
    <text>May be produced at very low levels due to a premature stop codon in the mRNA, leading to nonsense-mediated mRNA decay.</text>
</comment>
<comment type="similarity">
    <text evidence="31">Belongs to the MHC class I family.</text>
</comment>
<comment type="online information" name="Atlas of Genetics and Cytogenetics in Oncology and Haematology">
    <link uri="https://atlasgeneticsoncology.org/gene/44099/HFE"/>
</comment>
<accession>Q30201</accession>
<accession>B2CKL0</accession>
<accession>O75929</accession>
<accession>O75930</accession>
<accession>O75931</accession>
<accession>Q17RT0</accession>
<accession>Q96KU5</accession>
<accession>Q96KU6</accession>
<accession>Q96KU7</accession>
<accession>Q96KU8</accession>
<accession>Q9HC64</accession>
<accession>Q9HC68</accession>
<accession>Q9HC70</accession>
<accession>Q9HC83</accession>
<sequence length="348" mass="40108">MGPRARPALLLLMLLQTAVLQGRLLRSHSLHYLFMGASEQDLGLSLFEALGYVDDQLFVFYDHESRRVEPRTPWVSSRISSQMWLQLSQSLKGWDHMFTVDFWTIMENHNHSKESHTLQVILGCEMQEDNSTEGYWKYGYDGQDHLEFCPDTLDWRAAEPRAWPTKLEWERHKIRARQNRAYLERDCPAQLQQLLELGRGVLDQQVPPLVKVTHHVTSSVTTLRCRALNYYPQNITMKWLKDKQPMDAKEFEPKDVLPNGDGTYQGWITLAVPPGEEQRYTCQVEHPGLDQPLIVIWEPSPSGTLVIGVISGIAVFVVILFIGILFIILRKRQGSRGAMGHYVLAERE</sequence>
<name>HFE_HUMAN</name>
<proteinExistence type="evidence at protein level"/>
<keyword id="KW-0002">3D-structure</keyword>
<keyword id="KW-0025">Alternative splicing</keyword>
<keyword id="KW-1003">Cell membrane</keyword>
<keyword id="KW-0225">Disease variant</keyword>
<keyword id="KW-1015">Disulfide bond</keyword>
<keyword id="KW-0325">Glycoprotein</keyword>
<keyword id="KW-0406">Ion transport</keyword>
<keyword id="KW-0408">Iron</keyword>
<keyword id="KW-0410">Iron transport</keyword>
<keyword id="KW-0472">Membrane</keyword>
<keyword id="KW-1267">Proteomics identification</keyword>
<keyword id="KW-1185">Reference proteome</keyword>
<keyword id="KW-0732">Signal</keyword>
<keyword id="KW-0812">Transmembrane</keyword>
<keyword id="KW-1133">Transmembrane helix</keyword>
<keyword id="KW-0813">Transport</keyword>
<organism>
    <name type="scientific">Homo sapiens</name>
    <name type="common">Human</name>
    <dbReference type="NCBI Taxonomy" id="9606"/>
    <lineage>
        <taxon>Eukaryota</taxon>
        <taxon>Metazoa</taxon>
        <taxon>Chordata</taxon>
        <taxon>Craniata</taxon>
        <taxon>Vertebrata</taxon>
        <taxon>Euteleostomi</taxon>
        <taxon>Mammalia</taxon>
        <taxon>Eutheria</taxon>
        <taxon>Euarchontoglires</taxon>
        <taxon>Primates</taxon>
        <taxon>Haplorrhini</taxon>
        <taxon>Catarrhini</taxon>
        <taxon>Hominidae</taxon>
        <taxon>Homo</taxon>
    </lineage>
</organism>
<feature type="signal peptide">
    <location>
        <begin position="1"/>
        <end position="22"/>
    </location>
</feature>
<feature type="chain" id="PRO_0000018892" description="Hereditary hemochromatosis protein">
    <location>
        <begin position="23"/>
        <end position="348"/>
    </location>
</feature>
<feature type="topological domain" description="Extracellular" evidence="33">
    <location>
        <begin position="23"/>
        <end position="306"/>
    </location>
</feature>
<feature type="transmembrane region" description="Helical" evidence="1">
    <location>
        <begin position="307"/>
        <end position="330"/>
    </location>
</feature>
<feature type="topological domain" description="Cytoplasmic" evidence="33">
    <location>
        <begin position="331"/>
        <end position="348"/>
    </location>
</feature>
<feature type="domain" description="Ig-like C1-type">
    <location>
        <begin position="207"/>
        <end position="298"/>
    </location>
</feature>
<feature type="region of interest" description="Alpha-1">
    <location>
        <begin position="23"/>
        <end position="114"/>
    </location>
</feature>
<feature type="region of interest" description="Alpha-2">
    <location>
        <begin position="115"/>
        <end position="205"/>
    </location>
</feature>
<feature type="region of interest" description="Alpha-3">
    <location>
        <begin position="206"/>
        <end position="297"/>
    </location>
</feature>
<feature type="region of interest" description="Connecting peptide">
    <location>
        <begin position="298"/>
        <end position="306"/>
    </location>
</feature>
<feature type="glycosylation site" description="N-linked (GlcNAc...) asparagine" evidence="1">
    <location>
        <position position="110"/>
    </location>
</feature>
<feature type="glycosylation site" description="N-linked (GlcNAc...) asparagine" evidence="1">
    <location>
        <position position="130"/>
    </location>
</feature>
<feature type="glycosylation site" description="N-linked (GlcNAc...) asparagine" evidence="1">
    <location>
        <position position="234"/>
    </location>
</feature>
<feature type="disulfide bond">
    <location>
        <begin position="124"/>
        <end position="187"/>
    </location>
</feature>
<feature type="disulfide bond">
    <location>
        <begin position="225"/>
        <end position="282"/>
    </location>
</feature>
<feature type="splice variant" id="VSP_003218" description="In isoform 2 and isoform 4." evidence="28 30">
    <original>RSHSLHYLFMGASEQDLGLSLFEALGYVDDQLFVFYDHESRRVEPRTPWVSSRISSQMWLQLSQSLKGWDHMFTVDFWTIMENHNHSKE</original>
    <variation>Q</variation>
    <location>
        <begin position="26"/>
        <end position="114"/>
    </location>
</feature>
<feature type="splice variant" id="VSP_003219" description="In isoform 5." evidence="30">
    <original>RSHSLHYLFMGASEQDLGLSLFEA</original>
    <variation>P</variation>
    <location>
        <begin position="26"/>
        <end position="49"/>
    </location>
</feature>
<feature type="splice variant" id="VSP_043477" description="In isoform 11." evidence="30">
    <original>R</original>
    <variation>Q</variation>
    <location>
        <position position="26"/>
    </location>
</feature>
<feature type="splice variant" id="VSP_047336" description="In isoform 6." evidence="30">
    <original>R</original>
    <variation>L</variation>
    <location>
        <position position="26"/>
    </location>
</feature>
<feature type="splice variant" id="VSP_043478" description="In isoform 11." evidence="30">
    <location>
        <begin position="27"/>
        <end position="298"/>
    </location>
</feature>
<feature type="splice variant" id="VSP_003220" description="In isoform 6." evidence="30">
    <location>
        <begin position="27"/>
        <end position="206"/>
    </location>
</feature>
<feature type="splice variant" id="VSP_003222" description="In isoform 10." evidence="29">
    <location>
        <begin position="114"/>
        <end position="219"/>
    </location>
</feature>
<feature type="splice variant" id="VSP_003221" description="In isoform 7." evidence="29 30">
    <location>
        <begin position="114"/>
        <end position="205"/>
    </location>
</feature>
<feature type="splice variant" id="VSP_003223" description="In isoform 9." evidence="29">
    <original>DHLEFCPDTLDWRAAEPR</original>
    <variation>VLQDTIYSSEVSSLGIKF</variation>
    <location>
        <begin position="144"/>
        <end position="161"/>
    </location>
</feature>
<feature type="splice variant" id="VSP_003224" description="In isoform 9." evidence="29">
    <location>
        <begin position="162"/>
        <end position="348"/>
    </location>
</feature>
<feature type="splice variant" id="VSP_003225" description="In isoform 3 and isoform 4." evidence="28">
    <location>
        <begin position="207"/>
        <end position="220"/>
    </location>
</feature>
<feature type="splice variant" id="VSP_003226" description="In isoform 8." evidence="29">
    <original>GE</original>
    <variation>KY</variation>
    <location>
        <begin position="275"/>
        <end position="276"/>
    </location>
</feature>
<feature type="splice variant" id="VSP_003227" description="In isoform 8." evidence="29">
    <location>
        <begin position="277"/>
        <end position="348"/>
    </location>
</feature>
<feature type="sequence variant" id="VAR_042506" description="In HFE1; uncertain significance; dbSNP:rs149342416." evidence="12">
    <original>R</original>
    <variation>S</variation>
    <location>
        <position position="6"/>
    </location>
</feature>
<feature type="sequence variant" id="VAR_042507" description="In HFE1; associated in cis with D-63 in one patient." evidence="17">
    <original>G</original>
    <variation>D</variation>
    <location>
        <position position="43"/>
    </location>
</feature>
<feature type="sequence variant" id="VAR_008111" description="In dbSNP:rs28934889." evidence="4 27">
    <original>V</original>
    <variation>M</variation>
    <location>
        <position position="53"/>
    </location>
</feature>
<feature type="sequence variant" id="VAR_008112" description="In dbSNP:rs111033557." evidence="4">
    <original>V</original>
    <variation>M</variation>
    <location>
        <position position="59"/>
    </location>
</feature>
<feature type="sequence variant" id="VAR_004396" description="In HFE1; associated in cis with D-43 in one patient; also found in individuals with variegate porphyria; increased frequency among patients with diabetic nephropathy; low penetrance variant; dbSNP:rs1799945." evidence="2 3 4 8 9 17 19 21 22 25 27">
    <original>H</original>
    <variation>D</variation>
    <location>
        <position position="63"/>
    </location>
</feature>
<feature type="sequence variant" id="VAR_004397" description="In HFE1; mild form; dbSNP:rs1800730." evidence="3 5 11 14 26">
    <original>S</original>
    <variation>C</variation>
    <location>
        <position position="65"/>
    </location>
</feature>
<feature type="sequence variant" id="VAR_042508" description="In HFE1; dbSNP:rs747739169." evidence="14">
    <original>R</original>
    <variation>C</variation>
    <location>
        <position position="66"/>
    </location>
</feature>
<feature type="sequence variant" id="VAR_008729" description="In HFE1; dbSNP:rs28934597." evidence="5">
    <original>G</original>
    <variation>R</variation>
    <location>
        <position position="93"/>
    </location>
</feature>
<feature type="sequence variant" id="VAR_008730" description="In HFE1; dbSNP:rs28934596." evidence="5">
    <original>I</original>
    <variation>T</variation>
    <location>
        <position position="105"/>
    </location>
</feature>
<feature type="sequence variant" id="VAR_008113" description="In HFE1; dbSNP:rs28934595." evidence="4">
    <original>Q</original>
    <variation>H</variation>
    <location>
        <position position="127"/>
    </location>
</feature>
<feature type="sequence variant" id="VAR_042509" description="In HFE1; uncertain significance." evidence="10">
    <original>A</original>
    <variation>V</variation>
    <location>
        <position position="176"/>
    </location>
</feature>
<feature type="sequence variant" id="VAR_020270" description="In dbSNP:rs4986950.">
    <original>T</original>
    <variation>I</variation>
    <location>
        <position position="217"/>
    </location>
</feature>
<feature type="sequence variant" id="VAR_042510" description="In HFE1." evidence="14">
    <original>R</original>
    <variation>G</variation>
    <location>
        <position position="224"/>
    </location>
</feature>
<feature type="sequence variant" id="VAR_062279" description="In dbSNP:rs62625346." evidence="27">
    <original>R</original>
    <variation>Q</variation>
    <location>
        <position position="224"/>
    </location>
</feature>
<feature type="sequence variant" id="VAR_008731" description="In dbSNP:rs140080192." evidence="6">
    <original>E</original>
    <variation>K</variation>
    <location>
        <position position="277"/>
    </location>
</feature>
<feature type="sequence variant" id="VAR_004398" description="In HFE1; probable risk factor for porphyria cutanea tarda; correlated with increased serum transferrin levels; higher frequency in patients with type 2 diabetes than in controls; dbSNP:rs1800562." evidence="2 3 8 9 11 14 17 19 20 21 25 27">
    <original>C</original>
    <variation>Y</variation>
    <location>
        <position position="282"/>
    </location>
</feature>
<feature type="sequence variant" id="VAR_037304" description="In HFE1; destabilizing effect on the tertiary structure of the protein; prevents the normal interaction between HFE and B2M and between HFE and TFRC; decreases the capacity of HFE to reduce transferrin-mediated iron uptake; dbSNP:rs111033563." evidence="13 16">
    <original>Q</original>
    <variation>P</variation>
    <location>
        <position position="283"/>
    </location>
</feature>
<feature type="sequence variant" id="VAR_042511" description="In HFE1; dbSNP:rs143175221." evidence="11 15">
    <original>V</original>
    <variation>A</variation>
    <location>
        <position position="295"/>
    </location>
</feature>
<feature type="sequence variant" id="VAR_008114" description="In HFE1; dbSNP:rs111033558." evidence="4">
    <original>R</original>
    <variation>M</variation>
    <location>
        <position position="330"/>
    </location>
</feature>
<feature type="sequence conflict" description="In Ref. 7; AAG29342." evidence="31" ref="7">
    <original>Y</original>
    <variation>H</variation>
    <location>
        <position position="230"/>
    </location>
</feature>
<feature type="sequence conflict" description="In Ref. 7; AAG29575." evidence="31" ref="7">
    <original>A</original>
    <variation>T</variation>
    <location>
        <position position="248"/>
    </location>
</feature>
<feature type="sequence conflict" description="In Ref. 7; AAG29577." evidence="31" ref="7">
    <original>V</original>
    <variation>A</variation>
    <location>
        <position position="256"/>
    </location>
</feature>
<feature type="sequence conflict" description="In Ref. 7; AAG29342." evidence="31" ref="7">
    <original>G</original>
    <variation>E</variation>
    <location>
        <position position="275"/>
    </location>
</feature>
<feature type="sequence conflict" description="In Ref. 7; AAG29342." evidence="31" ref="7">
    <original>S</original>
    <variation>R</variation>
    <location>
        <position position="311"/>
    </location>
</feature>
<feature type="sequence conflict" description="In Ref. 7; AAG29577." evidence="31" ref="7">
    <original>M</original>
    <variation>V</variation>
    <location>
        <position position="339"/>
    </location>
</feature>
<feature type="strand" evidence="34">
    <location>
        <begin position="28"/>
        <end position="38"/>
    </location>
</feature>
<feature type="strand" evidence="34">
    <location>
        <begin position="43"/>
        <end position="45"/>
    </location>
</feature>
<feature type="strand" evidence="34">
    <location>
        <begin position="48"/>
        <end position="53"/>
    </location>
</feature>
<feature type="strand" evidence="34">
    <location>
        <begin position="56"/>
        <end position="65"/>
    </location>
</feature>
<feature type="strand" evidence="34">
    <location>
        <begin position="68"/>
        <end position="70"/>
    </location>
</feature>
<feature type="helix" evidence="35">
    <location>
        <begin position="75"/>
        <end position="78"/>
    </location>
</feature>
<feature type="turn" evidence="34">
    <location>
        <begin position="79"/>
        <end position="82"/>
    </location>
</feature>
<feature type="helix" evidence="34">
    <location>
        <begin position="83"/>
        <end position="107"/>
    </location>
</feature>
<feature type="turn" evidence="34">
    <location>
        <begin position="108"/>
        <end position="110"/>
    </location>
</feature>
<feature type="strand" evidence="34">
    <location>
        <begin position="112"/>
        <end position="114"/>
    </location>
</feature>
<feature type="strand" evidence="34">
    <location>
        <begin position="117"/>
        <end position="126"/>
    </location>
</feature>
<feature type="strand" evidence="34">
    <location>
        <begin position="132"/>
        <end position="140"/>
    </location>
</feature>
<feature type="strand" evidence="34">
    <location>
        <begin position="143"/>
        <end position="149"/>
    </location>
</feature>
<feature type="helix" evidence="34">
    <location>
        <begin position="150"/>
        <end position="152"/>
    </location>
</feature>
<feature type="strand" evidence="34">
    <location>
        <begin position="154"/>
        <end position="159"/>
    </location>
</feature>
<feature type="helix" evidence="34">
    <location>
        <begin position="160"/>
        <end position="162"/>
    </location>
</feature>
<feature type="helix" evidence="34">
    <location>
        <begin position="163"/>
        <end position="170"/>
    </location>
</feature>
<feature type="helix" evidence="34">
    <location>
        <begin position="174"/>
        <end position="184"/>
    </location>
</feature>
<feature type="helix" evidence="34">
    <location>
        <begin position="186"/>
        <end position="198"/>
    </location>
</feature>
<feature type="turn" evidence="34">
    <location>
        <begin position="199"/>
        <end position="201"/>
    </location>
</feature>
<feature type="strand" evidence="34">
    <location>
        <begin position="209"/>
        <end position="216"/>
    </location>
</feature>
<feature type="strand" evidence="34">
    <location>
        <begin position="221"/>
        <end position="233"/>
    </location>
</feature>
<feature type="strand" evidence="34">
    <location>
        <begin position="236"/>
        <end position="241"/>
    </location>
</feature>
<feature type="helix" evidence="34">
    <location>
        <begin position="248"/>
        <end position="250"/>
    </location>
</feature>
<feature type="strand" evidence="34">
    <location>
        <begin position="255"/>
        <end position="258"/>
    </location>
</feature>
<feature type="strand" evidence="34">
    <location>
        <begin position="264"/>
        <end position="272"/>
    </location>
</feature>
<feature type="helix" evidence="34">
    <location>
        <begin position="276"/>
        <end position="279"/>
    </location>
</feature>
<feature type="strand" evidence="34">
    <location>
        <begin position="280"/>
        <end position="285"/>
    </location>
</feature>
<feature type="strand" evidence="34">
    <location>
        <begin position="289"/>
        <end position="291"/>
    </location>
</feature>
<feature type="strand" evidence="34">
    <location>
        <begin position="293"/>
        <end position="296"/>
    </location>
</feature>
<gene>
    <name type="primary">HFE</name>
    <name type="synonym">HLAH</name>
</gene>
<reference key="1">
    <citation type="journal article" date="1996" name="Nat. Genet.">
        <title>A novel MHC class I-like gene is mutated in patients with hereditary haemochromatosis.</title>
        <authorList>
            <person name="Feder J.N."/>
            <person name="Gnirke A."/>
            <person name="Thomas W."/>
            <person name="Tsuchihashi Z."/>
            <person name="Ruddy D.A."/>
            <person name="Basava A."/>
            <person name="Dormishian F."/>
            <person name="Domingo R. Jr."/>
            <person name="Ellis M.C. Jr."/>
            <person name="Fullan A."/>
            <person name="Hinton L.M."/>
            <person name="Jones N.L."/>
            <person name="Kimmel B.E."/>
            <person name="Kronmal G.S."/>
            <person name="Lauer P."/>
            <person name="Lee V.K."/>
            <person name="Loeb D.B."/>
            <person name="Mapa F.A."/>
            <person name="McClelland E."/>
            <person name="Meyer N.C."/>
            <person name="Mintier G.A."/>
            <person name="Moeller N."/>
            <person name="Moore T."/>
            <person name="Morikang E."/>
            <person name="Prass C.E."/>
            <person name="Quintana L."/>
            <person name="Starnes S.M."/>
            <person name="Schatzman R.C."/>
            <person name="Brunke K.J."/>
            <person name="Drayna D.T."/>
            <person name="Risch N.J."/>
            <person name="Bacon B.R."/>
            <person name="Wolff R.K."/>
        </authorList>
    </citation>
    <scope>NUCLEOTIDE SEQUENCE [MRNA] (ISOFORM 1)</scope>
    <scope>VARIANT HFE1 TYR-282</scope>
    <scope>VARIANT ASP-63</scope>
</reference>
<reference key="2">
    <citation type="journal article" date="1997" name="Genome Res.">
        <title>A 1.1-Mb transcript map of the hereditary hemochromatosis locus.</title>
        <authorList>
            <person name="Ruddy D.A."/>
            <person name="Kronmal G.S."/>
            <person name="Lee V.K."/>
            <person name="Mintier G.A."/>
            <person name="Quintana L."/>
            <person name="Domingo R. Jr."/>
            <person name="Meyer N.C."/>
            <person name="Irrinki A."/>
            <person name="McClelland E.E."/>
            <person name="Fullan A."/>
            <person name="Mapa F.A."/>
            <person name="Moore T."/>
            <person name="Thomas W."/>
            <person name="Loeb D.B."/>
            <person name="Harmon C."/>
            <person name="Tsuchihashi Z."/>
            <person name="Wolff R.K."/>
            <person name="Schatzman R.C."/>
            <person name="Feder J.N."/>
        </authorList>
    </citation>
    <scope>NUCLEOTIDE SEQUENCE [GENOMIC DNA / MRNA] (ISOFORM 1)</scope>
</reference>
<reference key="3">
    <citation type="journal article" date="1998" name="J. Cell. Biochem.">
        <title>The haemochromatosis candidate gene HFE (HLA-H) of man and mouse is located in syntenic regions within the histone gene.</title>
        <authorList>
            <person name="Albig W."/>
            <person name="Drabent B."/>
            <person name="Burmester N."/>
            <person name="Bode C."/>
            <person name="Doenecke D."/>
        </authorList>
    </citation>
    <scope>NUCLEOTIDE SEQUENCE [GENOMIC DNA] (ISOFORM 1)</scope>
</reference>
<reference key="4">
    <citation type="submission" date="1997-09" db="EMBL/GenBank/DDBJ databases">
        <title>Hereditary hemochromatosis genomic structure and organization of HLA-H gene.</title>
        <authorList>
            <person name="Gasparini P."/>
        </authorList>
    </citation>
    <scope>NUCLEOTIDE SEQUENCE [GENOMIC DNA] (ISOFORM 1)</scope>
</reference>
<reference key="5">
    <citation type="journal article" date="1999" name="Immunogenetics">
        <title>Alternate splice variants of the hemochromatosis gene Hfe.</title>
        <authorList>
            <person name="Rhodes D.A."/>
            <person name="Trowsdale J."/>
        </authorList>
    </citation>
    <scope>NUCLEOTIDE SEQUENCE [MRNA] (ISOFORMS 2; 3 AND 4)</scope>
</reference>
<reference key="6">
    <citation type="journal article" date="2000" name="Blood Cells Mol. Dis.">
        <title>The HFE gene undergoes alternate splicing processes.</title>
        <authorList>
            <person name="Thenie A."/>
            <person name="Orhant M."/>
            <person name="Gicquel I."/>
            <person name="Fergelot P."/>
            <person name="Le Gall J.-Y."/>
            <person name="David V."/>
            <person name="Mosser J."/>
        </authorList>
    </citation>
    <scope>NUCLEOTIDE SEQUENCE [MRNA] (ISOFORMS 1; 7; 8; 9 AND 10)</scope>
</reference>
<reference key="7">
    <citation type="journal article" date="2001" name="Blood Cells Mol. Dis.">
        <title>Complete characterization of the 3' region of the human and mouse hereditary hemochromatosis HFE gene and detection of novel splicing forms.</title>
        <authorList>
            <person name="Sanchez M."/>
            <person name="Bruguera M."/>
            <person name="Rodos J."/>
            <person name="Oliva R."/>
        </authorList>
    </citation>
    <scope>NUCLEOTIDE SEQUENCE [MRNA] (ISOFORMS 2; 5; 6; 7 AND 11)</scope>
</reference>
<reference key="8">
    <citation type="submission" date="2008-02" db="EMBL/GenBank/DDBJ databases">
        <authorList>
            <consortium name="NIEHS SNPs program"/>
        </authorList>
    </citation>
    <scope>NUCLEOTIDE SEQUENCE [GENOMIC DNA]</scope>
    <scope>VARIANTS MET-53; ASP-63; GLN-224 AND TYR-282</scope>
</reference>
<reference key="9">
    <citation type="submission" date="2005-07" db="EMBL/GenBank/DDBJ databases">
        <authorList>
            <person name="Mural R.J."/>
            <person name="Istrail S."/>
            <person name="Sutton G.G."/>
            <person name="Florea L."/>
            <person name="Halpern A.L."/>
            <person name="Mobarry C.M."/>
            <person name="Lippert R."/>
            <person name="Walenz B."/>
            <person name="Shatkay H."/>
            <person name="Dew I."/>
            <person name="Miller J.R."/>
            <person name="Flanigan M.J."/>
            <person name="Edwards N.J."/>
            <person name="Bolanos R."/>
            <person name="Fasulo D."/>
            <person name="Halldorsson B.V."/>
            <person name="Hannenhalli S."/>
            <person name="Turner R."/>
            <person name="Yooseph S."/>
            <person name="Lu F."/>
            <person name="Nusskern D.R."/>
            <person name="Shue B.C."/>
            <person name="Zheng X.H."/>
            <person name="Zhong F."/>
            <person name="Delcher A.L."/>
            <person name="Huson D.H."/>
            <person name="Kravitz S.A."/>
            <person name="Mouchard L."/>
            <person name="Reinert K."/>
            <person name="Remington K.A."/>
            <person name="Clark A.G."/>
            <person name="Waterman M.S."/>
            <person name="Eichler E.E."/>
            <person name="Adams M.D."/>
            <person name="Hunkapiller M.W."/>
            <person name="Myers E.W."/>
            <person name="Venter J.C."/>
        </authorList>
    </citation>
    <scope>NUCLEOTIDE SEQUENCE [LARGE SCALE GENOMIC DNA]</scope>
</reference>
<reference key="10">
    <citation type="journal article" date="2004" name="Genome Res.">
        <title>The status, quality, and expansion of the NIH full-length cDNA project: the Mammalian Gene Collection (MGC).</title>
        <authorList>
            <consortium name="The MGC Project Team"/>
        </authorList>
    </citation>
    <scope>NUCLEOTIDE SEQUENCE [LARGE SCALE MRNA] (ISOFORM 1)</scope>
    <source>
        <tissue>Colon</tissue>
    </source>
</reference>
<reference key="11">
    <citation type="journal article" date="1998" name="Proc. Natl. Acad. Sci. U.S.A.">
        <title>The hemochromatosis gene product complexes with the transferrin receptor and lowers its affinity for ligand binding.</title>
        <authorList>
            <person name="Feder J.N."/>
            <person name="Penny D.M."/>
            <person name="Irrinki A."/>
            <person name="Lee V.K."/>
            <person name="Lebron J.A."/>
            <person name="Watson N."/>
            <person name="Tsuchihashi Z."/>
            <person name="Sigal E."/>
            <person name="Bjorkman P.J."/>
            <person name="Schatzman R.C."/>
        </authorList>
    </citation>
    <scope>FUNCTION</scope>
    <scope>SUBCELLULAR LOCATION</scope>
</reference>
<reference key="12">
    <citation type="journal article" date="2009" name="Am. J. Hum. Genet.">
        <title>Variants in TF and HFE explain approximately 40% of genetic variation in serum-transferrin levels.</title>
        <authorList>
            <person name="Benyamin B."/>
            <person name="McRae A.F."/>
            <person name="Zhu G."/>
            <person name="Gordon S."/>
            <person name="Henders A.K."/>
            <person name="Palotie A."/>
            <person name="Peltonen L."/>
            <person name="Martin N.G."/>
            <person name="Montgomery G.W."/>
            <person name="Whitfield J.B."/>
            <person name="Visscher P.M."/>
        </authorList>
    </citation>
    <scope>POLYMORPHISM</scope>
</reference>
<reference key="13">
    <citation type="journal article" date="1998" name="Cell">
        <title>Crystal structure of the hemochromatosis protein HFE and characterization of its interaction with transferrin receptor.</title>
        <authorList>
            <person name="Lebron J.A."/>
            <person name="Bennett M.J."/>
            <person name="Vaughn D.E."/>
            <person name="Chirino A.J."/>
            <person name="Snow P.M."/>
            <person name="Mintier G.A."/>
            <person name="Feder J.N."/>
            <person name="Bjorkman P.J."/>
        </authorList>
    </citation>
    <scope>X-RAY CRYSTALLOGRAPHY (2.6 ANGSTROMS) OF 23-297 IN COMPLEX WITH TFR</scope>
</reference>
<reference key="14">
    <citation type="journal article" date="2000" name="Biochim. Biophys. Acta">
        <title>A 3-dimensional model building by homology of the HFE protein: molecular consequences and application to antibody development.</title>
        <authorList>
            <person name="Dupradeau F."/>
            <person name="Altenberg-Greulich B."/>
            <person name="Warin R."/>
            <person name="Fuentes V."/>
            <person name="Monti J."/>
            <person name="Rochette J."/>
        </authorList>
    </citation>
    <scope>3D-STRUCTURE MODELING OF 26-293 IN COMPLEX WITH B2MG</scope>
</reference>
<reference key="15">
    <citation type="journal article" date="2000" name="Nature">
        <title>Crystal structure of the hereditary haemochromatosis protein HFE complexed with transferrin receptor.</title>
        <authorList>
            <person name="Bennett M.J."/>
            <person name="Lebron J.A."/>
            <person name="Bjorkman P.J."/>
        </authorList>
    </citation>
    <scope>X-RAY CRYSTALLOGRAPHY (2.8 ANGSTROMS) OF 26-297 IN COMPLEX WITH TFR</scope>
</reference>
<reference key="16">
    <citation type="journal article" date="2004" name="Genome Biol.">
        <title>An unappreciated role for RNA surveillance.</title>
        <authorList>
            <person name="Hillman R.T."/>
            <person name="Green R.E."/>
            <person name="Brenner S.E."/>
        </authorList>
    </citation>
    <scope>SPLICE ISOFORM(S) THAT ARE POTENTIAL NMD TARGET(S)</scope>
</reference>
<reference key="17">
    <citation type="journal article" date="1997" name="Am. J. Hum. Genet.">
        <title>Mutation analysis of the HLA-H gene in Italian hemochromatosis patients.</title>
        <authorList>
            <person name="Carella M."/>
            <person name="D'Ambrosio L."/>
            <person name="Totaro A."/>
            <person name="Grifa A."/>
            <person name="Valentino M.A."/>
            <person name="Piperno A."/>
            <person name="Girelli D."/>
            <person name="Roetto A."/>
            <person name="Franco B."/>
            <person name="Gasparini P."/>
            <person name="Camaschella C."/>
        </authorList>
    </citation>
    <scope>VARIANTS HFE1 ASP-63 AND TYR-282</scope>
</reference>
<reference key="18">
    <citation type="journal article" date="1997" name="Lancet">
        <title>Increased frequency of the haemochromatosis Cys282Tyr mutation in sporadic porphyria cutanea tarda.</title>
        <authorList>
            <person name="Roberts A.G."/>
            <person name="Whatley S.D."/>
            <person name="Morgan R.R."/>
            <person name="Worwood M."/>
            <person name="Elder G.H."/>
        </authorList>
    </citation>
    <scope>VARIANT HFE1 TYR-282</scope>
    <scope>ASSOCIATION WITH PORPHYRIA CUTANEA TARDA</scope>
</reference>
<reference key="19">
    <citation type="journal article" date="1998" name="Hepatology">
        <title>High prevalence of the His63Asp HFE mutation in Italian patients with porphyria cutanea tarda.</title>
        <authorList>
            <person name="Sampietro M."/>
            <person name="Piperno A."/>
            <person name="Lupica L."/>
            <person name="Arosio C."/>
            <person name="Vergani A."/>
            <person name="Corbetta N."/>
            <person name="Malosio I."/>
            <person name="Mattioli M."/>
            <person name="Fracanzani A.L."/>
            <person name="Cappellini M.D."/>
            <person name="Fiorelli G."/>
            <person name="Fargion S."/>
        </authorList>
    </citation>
    <scope>VARIANT ASP-63</scope>
</reference>
<reference key="20">
    <citation type="journal article" date="1998" name="Hepatology">
        <title>Porphyria cutanea tarda, hepatitis C, and HFE gene mutations in North America.</title>
        <authorList>
            <person name="Bonkovsky H.L."/>
            <person name="Poh-Fitzpatrick M."/>
            <person name="Pimstone N."/>
            <person name="Obando J."/>
            <person name="Di Bisceglie A."/>
            <person name="Tattrie C."/>
            <person name="Tortorelli K."/>
            <person name="LeClair P."/>
            <person name="Mercurio M.G."/>
            <person name="Lambrecht R.W."/>
        </authorList>
    </citation>
    <scope>VARIANTS HFE1 ASP-63 AND TYR-282</scope>
</reference>
<reference key="21">
    <citation type="journal article" date="1999" name="Blood">
        <title>HFE mutations analysis in 711 hemochromatosis probands: evidence for S65C implication in mild form of hemochromatosis.</title>
        <authorList>
            <person name="Mura C."/>
            <person name="Raguenes O."/>
            <person name="Ferec C."/>
        </authorList>
    </citation>
    <scope>VARIANTS HFE1 ASP-63; CYS-65 AND TYR-282</scope>
</reference>
<reference key="22">
    <citation type="journal article" date="1999" name="Blood Cells Mol. Dis.">
        <title>Two novel missense mutations of the HFE gene (I105T and G93R) and identification of the S65C mutation in Alabama hemochromatosis probands.</title>
        <authorList>
            <person name="Barton J.C."/>
            <person name="Sawada-Hirai R."/>
            <person name="Rothenberg B.E."/>
            <person name="Acton R.T."/>
        </authorList>
    </citation>
    <scope>VARIANTS HFE1 CYS-65; ARG-93 AND THR-105</scope>
</reference>
<reference key="23">
    <citation type="journal article" date="1999" name="Hum. Mol. Genet.">
        <title>Spectrum of mutations in the HFE gene implicated in haemochromatosis and porphyria.</title>
        <authorList>
            <person name="de Villiers J.N.P."/>
            <person name="Hillermann R."/>
            <person name="Loubser L."/>
            <person name="Kotze M.J."/>
        </authorList>
    </citation>
    <scope>VARIANTS HFE1 ASP-63; HIS-127 AND MET-330</scope>
    <scope>VARIANTS MET-53 AND MET-59</scope>
</reference>
<reference key="24">
    <citation type="journal article" date="1999" name="Hum. Mutat.">
        <title>A retrospective anonymous pilot study in screening newborns for HFE mutations in Scandinavian populations.</title>
        <authorList>
            <person name="Merryweather-Clarke A.T."/>
            <person name="Simonsen H."/>
            <person name="Shearman J.D."/>
            <person name="Pointon J.J."/>
            <person name="Norgaard-Pedersen B."/>
            <person name="Robson K.J.H."/>
        </authorList>
    </citation>
    <scope>VARIANTS HFE1 ASP-63 AND TYR-282</scope>
</reference>
<reference key="25">
    <citation type="journal article" date="1999" name="Hum. Mutat.">
        <title>A novel missense mutation S65C in the HFE gene with a possible role in hereditary haemochromatosis.</title>
        <authorList>
            <person name="Fagan E."/>
            <person name="Payne S.J."/>
        </authorList>
    </citation>
    <scope>VARIANT HFE1 CYS-65</scope>
</reference>
<reference key="26">
    <citation type="journal article" date="2000" name="Hum. Mutat.">
        <title>Two novel polymorphisms (E277K and V212V) in the haemochromatosis gene HFE.</title>
        <authorList>
            <person name="Bradbury R."/>
            <person name="Fagan E."/>
            <person name="Payne S.J."/>
        </authorList>
    </citation>
    <scope>VARIANT LYS-277</scope>
</reference>
<reference key="27">
    <citation type="journal article" date="2000" name="J. Invest. Dermatol.">
        <title>Co-inheritance of mutations in the uroporphyrinogen decarboxylase and hemochromatosis genes accelerates the onset of porphyria cutanea tarda.</title>
        <authorList>
            <person name="Brady J.J."/>
            <person name="Jackson H.A."/>
            <person name="Roberts A.G."/>
            <person name="Morgan R.R."/>
            <person name="Whatley S.D."/>
            <person name="Rowlands G.L."/>
            <person name="Darby C."/>
            <person name="Shudell E."/>
            <person name="Watson R."/>
            <person name="Paiker J."/>
            <person name="Worwood M.W."/>
            <person name="Elder G.H."/>
        </authorList>
    </citation>
    <scope>VARIANTS ASP-63 AND TYR-282</scope>
</reference>
<reference key="28">
    <citation type="journal article" date="2001" name="Diabetes Care">
        <title>Role of hemochromatosis C282Y and H63D mutations in HFE gene in development of type 2 diabetes and diabetic nephropathy.</title>
        <authorList>
            <person name="Moczulski D.K."/>
            <person name="Grzeszczak W."/>
            <person name="Gawlik B."/>
        </authorList>
    </citation>
    <scope>VARIANTS HFE1 ASP-63 AND TYR-282</scope>
    <scope>ASSOCIATION WITH DIABETIC NEPHROPATHY SUSCEPTIBILITY</scope>
</reference>
<reference key="29">
    <citation type="journal article" date="2001" name="Intern. Med.">
        <title>Idiopathic hemochromatosis with the mutation of Ala176Val heterozygous for HFE gene.</title>
        <authorList>
            <person name="Imanishi H."/>
            <person name="Liu W."/>
            <person name="Cheng J."/>
            <person name="Ikeda N."/>
            <person name="Amuro Y."/>
            <person name="Hada T."/>
        </authorList>
    </citation>
    <scope>VARIANT HFE1 VAL-176</scope>
</reference>
<reference key="30">
    <citation type="journal article" date="2002" name="Tissue Antigens">
        <title>Comprehensive hereditary hemochromatosis genotyping.</title>
        <authorList>
            <person name="Jones D.C."/>
            <person name="Young N.T."/>
            <person name="Pigott C."/>
            <person name="Fuggle S.V."/>
            <person name="Barnardo M.C.N.M."/>
            <person name="Marshall S.E."/>
            <person name="Bunce M."/>
        </authorList>
    </citation>
    <scope>VARIANTS HFE1 CYS-65; TYR-282 AND ALA-295</scope>
</reference>
<reference key="31">
    <citation type="journal article" date="2003" name="Blood Cells Mol. Dis.">
        <title>Phenotypic expression of the C282Y/Q283P compound heterozygosity in HFE and molecular modeling of the Q283P mutation effect.</title>
        <authorList>
            <person name="Le Gac G."/>
            <person name="Dupradeau F.-Y."/>
            <person name="Mura C."/>
            <person name="Jacolot S."/>
            <person name="Scotet V."/>
            <person name="Esnault G."/>
            <person name="Mercier A.-Y."/>
            <person name="Rochette J."/>
            <person name="Ferec C."/>
        </authorList>
    </citation>
    <scope>VARIANT HFE1 PRO-283</scope>
    <scope>CHARACTERIZATION OF VARIANT HFE1 PRO-283</scope>
</reference>
<reference key="32">
    <citation type="journal article" date="2003" name="Clin. Chem.">
        <title>Identification of new mutations of the HFE, hepcidin, and transferrin receptor 2 genes by denaturing HPLC analysis of individuals with biochemical indications of iron overload.</title>
        <authorList>
            <person name="Biasiotto G."/>
            <person name="Belloli S."/>
            <person name="Ruggeri G."/>
            <person name="Zanella I."/>
            <person name="Gerardi G."/>
            <person name="Corrado M."/>
            <person name="Gobbi E."/>
            <person name="Albertini A."/>
            <person name="Arosio P."/>
        </authorList>
    </citation>
    <scope>VARIANTS HFE1 CYS-65; CYS-66; GLY-224 AND TYR-282</scope>
</reference>
<reference key="33">
    <citation type="journal article" date="2003" name="Gut">
        <title>Heterozygous recipient and donor HFE mutations associated with a hereditary haemochromatosis phenotype after liver transplantation.</title>
        <authorList>
            <person name="Wigg A.J."/>
            <person name="Harley H."/>
            <person name="Casey G."/>
        </authorList>
    </citation>
    <scope>VARIANT HFE1 SER-6</scope>
</reference>
<reference key="34">
    <citation type="journal article" date="2004" name="Hum. Genet.">
        <title>Gene symbol: HFE. Disease: haemochromatosis.</title>
        <authorList>
            <person name="Bento M.C."/>
            <person name="Ribeiro M.L."/>
            <person name="Relvas L."/>
        </authorList>
    </citation>
    <scope>VARIANT HFE1 ALA-295</scope>
</reference>
<reference key="35">
    <citation type="journal article" date="2005" name="Hum. Genet.">
        <title>The Q283P amino-acid change in HFE leads to structural and functional consequences similar to those described for the mutated 282Y HFE protein.</title>
        <authorList>
            <person name="Ka C."/>
            <person name="Le Gac G."/>
            <person name="Dupradeau F.-Y."/>
            <person name="Rochette J."/>
            <person name="Ferec C."/>
        </authorList>
    </citation>
    <scope>CHARACTERIZATION OF VARIANT HFE1 PRO-283</scope>
</reference>
<reference key="36">
    <citation type="journal article" date="2008" name="Hum. Mutat.">
        <title>An unusual case of hemochromatosis due to a new compound heterozygosity in HFE (p.[Gly43Asp;His63Asp]+[Cys282Tyr]): structural implications with respect to binding with transferrin receptor 1.</title>
        <authorList>
            <person name="Dupradeau F.-Y."/>
            <person name="Pissard S."/>
            <person name="Coulhon M.-P."/>
            <person name="Cadet E."/>
            <person name="Foulon K."/>
            <person name="Fourcade C."/>
            <person name="Goossens M."/>
            <person name="Case D.A."/>
            <person name="Rochette J."/>
        </authorList>
    </citation>
    <scope>VARIANTS HFE1 ASP-43; ASP-63 AND TYR-282</scope>
</reference>
<protein>
    <recommendedName>
        <fullName>Hereditary hemochromatosis protein</fullName>
    </recommendedName>
    <alternativeName>
        <fullName>HLA-H</fullName>
    </alternativeName>
</protein>